<name>PEPDA_STRP8</name>
<comment type="catalytic activity">
    <reaction>
        <text>an L-aminoacyl-L-amino acid + H2O = 2 an L-alpha-amino acid</text>
        <dbReference type="Rhea" id="RHEA:48940"/>
        <dbReference type="ChEBI" id="CHEBI:15377"/>
        <dbReference type="ChEBI" id="CHEBI:59869"/>
        <dbReference type="ChEBI" id="CHEBI:77460"/>
        <dbReference type="EC" id="3.4.13.19"/>
    </reaction>
</comment>
<comment type="similarity">
    <text evidence="2">Belongs to the peptidase C69 family.</text>
</comment>
<proteinExistence type="inferred from homology"/>
<organism>
    <name type="scientific">Streptococcus pyogenes serotype M18 (strain MGAS8232)</name>
    <dbReference type="NCBI Taxonomy" id="186103"/>
    <lineage>
        <taxon>Bacteria</taxon>
        <taxon>Bacillati</taxon>
        <taxon>Bacillota</taxon>
        <taxon>Bacilli</taxon>
        <taxon>Lactobacillales</taxon>
        <taxon>Streptococcaceae</taxon>
        <taxon>Streptococcus</taxon>
    </lineage>
</organism>
<sequence>MDKKIQRFSCTTILVGKKASYDGSTMVARTEDSQNGDFTPKKMIVVKPEDQPRHYRSVQSSFEMDLPDNPMTYTSVPDALGKDGIWAEAGVNEANVTMSATETITTNSRVLGADPLVASGIGEEDMVTLVLPYIRSAREGVLRLGAILEDYGTYESNGVAFSDEHDIWWLETIGGHHWIARRVPDDAYVTNPNQFGIDHFEFNNPEDYLCSADLKDFIDTYHLDLTYSHEHFNPRYAFGSQRDKDRHYNTPRAWIMQKFLNPEIVQDPRSFALAWCQKPYRKITVEDVKYVLSSHYQDTGYDPYGSEGTPVSKKVFRPIGINRTSQTAILHIRPNKPQEIAAIQWIAYGSMPFNTMVPFFTQVKTIPDYFANTYENVSTDNFYWTNRLIAALADPHYNHHETDLDNYLEETMAKGHAMLHAVEAQLLAGETVDLEEENQKMSDYVQGETQTLLNKILFDASNLMTNRFSLSD</sequence>
<dbReference type="EC" id="3.4.13.19"/>
<dbReference type="EMBL" id="AE009949">
    <property type="protein sequence ID" value="AAL97447.1"/>
    <property type="molecule type" value="Genomic_DNA"/>
</dbReference>
<dbReference type="RefSeq" id="WP_011017593.1">
    <property type="nucleotide sequence ID" value="NC_003485.1"/>
</dbReference>
<dbReference type="SMR" id="Q8P1N3"/>
<dbReference type="MEROPS" id="C69.001"/>
<dbReference type="KEGG" id="spm:spyM18_0780"/>
<dbReference type="HOGENOM" id="CLU_014823_4_2_9"/>
<dbReference type="GO" id="GO:0070004">
    <property type="term" value="F:cysteine-type exopeptidase activity"/>
    <property type="evidence" value="ECO:0007669"/>
    <property type="project" value="InterPro"/>
</dbReference>
<dbReference type="GO" id="GO:0016805">
    <property type="term" value="F:dipeptidase activity"/>
    <property type="evidence" value="ECO:0007669"/>
    <property type="project" value="UniProtKB-KW"/>
</dbReference>
<dbReference type="GO" id="GO:0006508">
    <property type="term" value="P:proteolysis"/>
    <property type="evidence" value="ECO:0007669"/>
    <property type="project" value="UniProtKB-KW"/>
</dbReference>
<dbReference type="Gene3D" id="3.60.60.10">
    <property type="entry name" value="Penicillin V Acylase, Chain A"/>
    <property type="match status" value="1"/>
</dbReference>
<dbReference type="InterPro" id="IPR047804">
    <property type="entry name" value="C69_dipept_A-like"/>
</dbReference>
<dbReference type="InterPro" id="IPR005322">
    <property type="entry name" value="Peptidase_C69"/>
</dbReference>
<dbReference type="NCBIfam" id="NF033678">
    <property type="entry name" value="C69_fam_dipept"/>
    <property type="match status" value="1"/>
</dbReference>
<dbReference type="PANTHER" id="PTHR12994:SF17">
    <property type="entry name" value="LD30995P"/>
    <property type="match status" value="1"/>
</dbReference>
<dbReference type="PANTHER" id="PTHR12994">
    <property type="entry name" value="SECERNIN"/>
    <property type="match status" value="1"/>
</dbReference>
<dbReference type="Pfam" id="PF03577">
    <property type="entry name" value="Peptidase_C69"/>
    <property type="match status" value="1"/>
</dbReference>
<keyword id="KW-0224">Dipeptidase</keyword>
<keyword id="KW-0378">Hydrolase</keyword>
<keyword id="KW-0645">Protease</keyword>
<accession>Q8P1N3</accession>
<reference key="1">
    <citation type="journal article" date="2002" name="Proc. Natl. Acad. Sci. U.S.A.">
        <title>Genome sequence and comparative microarray analysis of serotype M18 group A Streptococcus strains associated with acute rheumatic fever outbreaks.</title>
        <authorList>
            <person name="Smoot J.C."/>
            <person name="Barbian K.D."/>
            <person name="Van Gompel J.J."/>
            <person name="Smoot L.M."/>
            <person name="Chaussee M.S."/>
            <person name="Sylva G.L."/>
            <person name="Sturdevant D.E."/>
            <person name="Ricklefs S.M."/>
            <person name="Porcella S.F."/>
            <person name="Parkins L.D."/>
            <person name="Beres S.B."/>
            <person name="Campbell D.S."/>
            <person name="Smith T.M."/>
            <person name="Zhang Q."/>
            <person name="Kapur V."/>
            <person name="Daly J.A."/>
            <person name="Veasy L.G."/>
            <person name="Musser J.M."/>
        </authorList>
    </citation>
    <scope>NUCLEOTIDE SEQUENCE [LARGE SCALE GENOMIC DNA]</scope>
    <source>
        <strain>MGAS8232</strain>
    </source>
</reference>
<protein>
    <recommendedName>
        <fullName>Probable dipeptidase A</fullName>
        <ecNumber>3.4.13.19</ecNumber>
    </recommendedName>
</protein>
<evidence type="ECO:0000255" key="1"/>
<evidence type="ECO:0000305" key="2"/>
<feature type="chain" id="PRO_0000220389" description="Probable dipeptidase A">
    <location>
        <begin position="1"/>
        <end position="472"/>
    </location>
</feature>
<feature type="active site" evidence="1">
    <location>
        <position position="10"/>
    </location>
</feature>
<gene>
    <name type="primary">pepDA</name>
    <name type="ordered locus">spyM18_0780</name>
</gene>